<feature type="chain" id="PRO_0000180752" description="Glucose-6-phosphate isomerase">
    <location>
        <begin position="1"/>
        <end position="529"/>
    </location>
</feature>
<feature type="active site" description="Proton donor" evidence="1">
    <location>
        <position position="322"/>
    </location>
</feature>
<feature type="active site" evidence="1">
    <location>
        <position position="351"/>
    </location>
</feature>
<feature type="active site" evidence="1">
    <location>
        <position position="455"/>
    </location>
</feature>
<name>G6PI_THEVB</name>
<accession>Q8DKY2</accession>
<proteinExistence type="inferred from homology"/>
<keyword id="KW-0963">Cytoplasm</keyword>
<keyword id="KW-0312">Gluconeogenesis</keyword>
<keyword id="KW-0324">Glycolysis</keyword>
<keyword id="KW-0413">Isomerase</keyword>
<keyword id="KW-1185">Reference proteome</keyword>
<comment type="function">
    <text evidence="1">Catalyzes the reversible isomerization of glucose-6-phosphate to fructose-6-phosphate.</text>
</comment>
<comment type="catalytic activity">
    <reaction evidence="1">
        <text>alpha-D-glucose 6-phosphate = beta-D-fructose 6-phosphate</text>
        <dbReference type="Rhea" id="RHEA:11816"/>
        <dbReference type="ChEBI" id="CHEBI:57634"/>
        <dbReference type="ChEBI" id="CHEBI:58225"/>
        <dbReference type="EC" id="5.3.1.9"/>
    </reaction>
</comment>
<comment type="pathway">
    <text evidence="1">Carbohydrate biosynthesis; gluconeogenesis.</text>
</comment>
<comment type="pathway">
    <text evidence="1">Carbohydrate degradation; glycolysis; D-glyceraldehyde 3-phosphate and glycerone phosphate from D-glucose: step 2/4.</text>
</comment>
<comment type="subcellular location">
    <subcellularLocation>
        <location evidence="1">Cytoplasm</location>
    </subcellularLocation>
</comment>
<comment type="similarity">
    <text evidence="1">Belongs to the GPI family.</text>
</comment>
<evidence type="ECO:0000255" key="1">
    <source>
        <dbReference type="HAMAP-Rule" id="MF_00473"/>
    </source>
</evidence>
<dbReference type="EC" id="5.3.1.9" evidence="1"/>
<dbReference type="EMBL" id="BA000039">
    <property type="protein sequence ID" value="BAC08268.1"/>
    <property type="molecule type" value="Genomic_DNA"/>
</dbReference>
<dbReference type="RefSeq" id="NP_681506.1">
    <property type="nucleotide sequence ID" value="NC_004113.1"/>
</dbReference>
<dbReference type="RefSeq" id="WP_011056564.1">
    <property type="nucleotide sequence ID" value="NC_004113.1"/>
</dbReference>
<dbReference type="SMR" id="Q8DKY2"/>
<dbReference type="STRING" id="197221.gene:10747307"/>
<dbReference type="EnsemblBacteria" id="BAC08268">
    <property type="protein sequence ID" value="BAC08268"/>
    <property type="gene ID" value="BAC08268"/>
</dbReference>
<dbReference type="KEGG" id="tel:tll0717"/>
<dbReference type="PATRIC" id="fig|197221.4.peg.757"/>
<dbReference type="eggNOG" id="COG0166">
    <property type="taxonomic scope" value="Bacteria"/>
</dbReference>
<dbReference type="UniPathway" id="UPA00109">
    <property type="reaction ID" value="UER00181"/>
</dbReference>
<dbReference type="UniPathway" id="UPA00138"/>
<dbReference type="Proteomes" id="UP000000440">
    <property type="component" value="Chromosome"/>
</dbReference>
<dbReference type="GO" id="GO:0005829">
    <property type="term" value="C:cytosol"/>
    <property type="evidence" value="ECO:0007669"/>
    <property type="project" value="TreeGrafter"/>
</dbReference>
<dbReference type="GO" id="GO:0097367">
    <property type="term" value="F:carbohydrate derivative binding"/>
    <property type="evidence" value="ECO:0007669"/>
    <property type="project" value="InterPro"/>
</dbReference>
<dbReference type="GO" id="GO:0004347">
    <property type="term" value="F:glucose-6-phosphate isomerase activity"/>
    <property type="evidence" value="ECO:0007669"/>
    <property type="project" value="UniProtKB-UniRule"/>
</dbReference>
<dbReference type="GO" id="GO:0048029">
    <property type="term" value="F:monosaccharide binding"/>
    <property type="evidence" value="ECO:0007669"/>
    <property type="project" value="TreeGrafter"/>
</dbReference>
<dbReference type="GO" id="GO:0006094">
    <property type="term" value="P:gluconeogenesis"/>
    <property type="evidence" value="ECO:0007669"/>
    <property type="project" value="UniProtKB-UniRule"/>
</dbReference>
<dbReference type="GO" id="GO:0051156">
    <property type="term" value="P:glucose 6-phosphate metabolic process"/>
    <property type="evidence" value="ECO:0007669"/>
    <property type="project" value="TreeGrafter"/>
</dbReference>
<dbReference type="GO" id="GO:0006096">
    <property type="term" value="P:glycolytic process"/>
    <property type="evidence" value="ECO:0007669"/>
    <property type="project" value="UniProtKB-UniRule"/>
</dbReference>
<dbReference type="CDD" id="cd05015">
    <property type="entry name" value="SIS_PGI_1"/>
    <property type="match status" value="1"/>
</dbReference>
<dbReference type="CDD" id="cd05016">
    <property type="entry name" value="SIS_PGI_2"/>
    <property type="match status" value="1"/>
</dbReference>
<dbReference type="FunFam" id="3.40.50.10490:FF:000021">
    <property type="entry name" value="Glucose-6-phosphate isomerase"/>
    <property type="match status" value="1"/>
</dbReference>
<dbReference type="FunFam" id="3.40.50.10490:FF:000023">
    <property type="entry name" value="Glucose-6-phosphate isomerase"/>
    <property type="match status" value="1"/>
</dbReference>
<dbReference type="Gene3D" id="3.40.50.10490">
    <property type="entry name" value="Glucose-6-phosphate isomerase like protein, domain 1"/>
    <property type="match status" value="2"/>
</dbReference>
<dbReference type="HAMAP" id="MF_00473">
    <property type="entry name" value="G6P_isomerase"/>
    <property type="match status" value="1"/>
</dbReference>
<dbReference type="InterPro" id="IPR001672">
    <property type="entry name" value="G6P_Isomerase"/>
</dbReference>
<dbReference type="InterPro" id="IPR018189">
    <property type="entry name" value="Phosphoglucose_isomerase_CS"/>
</dbReference>
<dbReference type="InterPro" id="IPR046348">
    <property type="entry name" value="SIS_dom_sf"/>
</dbReference>
<dbReference type="InterPro" id="IPR035476">
    <property type="entry name" value="SIS_PGI_1"/>
</dbReference>
<dbReference type="InterPro" id="IPR035482">
    <property type="entry name" value="SIS_PGI_2"/>
</dbReference>
<dbReference type="NCBIfam" id="NF010696">
    <property type="entry name" value="PRK14096.1"/>
    <property type="match status" value="1"/>
</dbReference>
<dbReference type="PANTHER" id="PTHR11469">
    <property type="entry name" value="GLUCOSE-6-PHOSPHATE ISOMERASE"/>
    <property type="match status" value="1"/>
</dbReference>
<dbReference type="PANTHER" id="PTHR11469:SF1">
    <property type="entry name" value="GLUCOSE-6-PHOSPHATE ISOMERASE"/>
    <property type="match status" value="1"/>
</dbReference>
<dbReference type="Pfam" id="PF00342">
    <property type="entry name" value="PGI"/>
    <property type="match status" value="2"/>
</dbReference>
<dbReference type="PRINTS" id="PR00662">
    <property type="entry name" value="G6PISOMERASE"/>
</dbReference>
<dbReference type="SUPFAM" id="SSF53697">
    <property type="entry name" value="SIS domain"/>
    <property type="match status" value="1"/>
</dbReference>
<dbReference type="PROSITE" id="PS00174">
    <property type="entry name" value="P_GLUCOSE_ISOMERASE_2"/>
    <property type="match status" value="1"/>
</dbReference>
<dbReference type="PROSITE" id="PS51463">
    <property type="entry name" value="P_GLUCOSE_ISOMERASE_3"/>
    <property type="match status" value="1"/>
</dbReference>
<sequence length="529" mass="57908">MDALALWQHYQDWLYYHPELEFYVDVSRMGLTPEVVHRLEPAFERAFEQMKELEAGAIANPDEGRMVGHYWLRDPDLAPSPELRSQIRDAIAQVKQFSQQVHSGAIAPPQGGHFTEILSIGIGGSALGPQFVAAALAPVHPPLNIHFLDNTDPAGFERVFAELGDRLRTTLVLVISKSGGTPETRNGMLEAQARFQRAGLAFADHAVAVTLPGSGLAQVAESNGWLAIFPMFDWVGGRTSELSTVGLLPAALQGIDIDDLLMGAKLMDQATRVPNIRQNPAALLALAWHHAGKGRGEKDMVILPYKDSLLLFSRYLQQLVMESLGKETDLNGNIVHQGIAVYGNKGTTDQHAYVQQLRDGLPNFFVTFIEVLRDGQEPSIEVEPGITAGDYLSGLLLGTRQALYEKNRPSLTVTIPEVTPKTVGALIALYERAVGLYGFLVNINAYHQPGVEAGKKAAAANLALQRQIVKVLEQSDEPLDLGAIAGAINAPDQLERIYLILRHLAANDRGIEQLGDPAQPSQLQFRWQR</sequence>
<protein>
    <recommendedName>
        <fullName evidence="1">Glucose-6-phosphate isomerase</fullName>
        <shortName evidence="1">GPI</shortName>
        <ecNumber evidence="1">5.3.1.9</ecNumber>
    </recommendedName>
    <alternativeName>
        <fullName evidence="1">Phosphoglucose isomerase</fullName>
        <shortName evidence="1">PGI</shortName>
    </alternativeName>
    <alternativeName>
        <fullName evidence="1">Phosphohexose isomerase</fullName>
        <shortName evidence="1">PHI</shortName>
    </alternativeName>
</protein>
<gene>
    <name evidence="1" type="primary">pgi</name>
    <name type="ordered locus">tll0717</name>
</gene>
<reference key="1">
    <citation type="journal article" date="2002" name="DNA Res.">
        <title>Complete genome structure of the thermophilic cyanobacterium Thermosynechococcus elongatus BP-1.</title>
        <authorList>
            <person name="Nakamura Y."/>
            <person name="Kaneko T."/>
            <person name="Sato S."/>
            <person name="Ikeuchi M."/>
            <person name="Katoh H."/>
            <person name="Sasamoto S."/>
            <person name="Watanabe A."/>
            <person name="Iriguchi M."/>
            <person name="Kawashima K."/>
            <person name="Kimura T."/>
            <person name="Kishida Y."/>
            <person name="Kiyokawa C."/>
            <person name="Kohara M."/>
            <person name="Matsumoto M."/>
            <person name="Matsuno A."/>
            <person name="Nakazaki N."/>
            <person name="Shimpo S."/>
            <person name="Sugimoto M."/>
            <person name="Takeuchi C."/>
            <person name="Yamada M."/>
            <person name="Tabata S."/>
        </authorList>
    </citation>
    <scope>NUCLEOTIDE SEQUENCE [LARGE SCALE GENOMIC DNA]</scope>
    <source>
        <strain>NIES-2133 / IAM M-273 / BP-1</strain>
    </source>
</reference>
<organism>
    <name type="scientific">Thermosynechococcus vestitus (strain NIES-2133 / IAM M-273 / BP-1)</name>
    <dbReference type="NCBI Taxonomy" id="197221"/>
    <lineage>
        <taxon>Bacteria</taxon>
        <taxon>Bacillati</taxon>
        <taxon>Cyanobacteriota</taxon>
        <taxon>Cyanophyceae</taxon>
        <taxon>Acaryochloridales</taxon>
        <taxon>Thermosynechococcaceae</taxon>
        <taxon>Thermosynechococcus</taxon>
    </lineage>
</organism>